<comment type="function">
    <text evidence="1">Catalyzes a trans-dehydration via an enolate intermediate.</text>
</comment>
<comment type="catalytic activity">
    <reaction evidence="1">
        <text>3-dehydroquinate = 3-dehydroshikimate + H2O</text>
        <dbReference type="Rhea" id="RHEA:21096"/>
        <dbReference type="ChEBI" id="CHEBI:15377"/>
        <dbReference type="ChEBI" id="CHEBI:16630"/>
        <dbReference type="ChEBI" id="CHEBI:32364"/>
        <dbReference type="EC" id="4.2.1.10"/>
    </reaction>
</comment>
<comment type="pathway">
    <text evidence="1">Metabolic intermediate biosynthesis; chorismate biosynthesis; chorismate from D-erythrose 4-phosphate and phosphoenolpyruvate: step 3/7.</text>
</comment>
<comment type="subunit">
    <text evidence="1">Homododecamer.</text>
</comment>
<comment type="similarity">
    <text evidence="1">Belongs to the type-II 3-dehydroquinase family.</text>
</comment>
<name>AROQ_BACCR</name>
<organism>
    <name type="scientific">Bacillus cereus (strain ATCC 14579 / DSM 31 / CCUG 7414 / JCM 2152 / NBRC 15305 / NCIMB 9373 / NCTC 2599 / NRRL B-3711)</name>
    <dbReference type="NCBI Taxonomy" id="226900"/>
    <lineage>
        <taxon>Bacteria</taxon>
        <taxon>Bacillati</taxon>
        <taxon>Bacillota</taxon>
        <taxon>Bacilli</taxon>
        <taxon>Bacillales</taxon>
        <taxon>Bacillaceae</taxon>
        <taxon>Bacillus</taxon>
        <taxon>Bacillus cereus group</taxon>
    </lineage>
</organism>
<sequence>MKKLLLVNGPNLNRLGVREVNVYGKGTLATLEADMKQEAETMGVELECFQSNHEGAIIDIIHEAEDIYEGIILNPGAFTHYSYAIRDAIASISIPVIEVHISNIHQRESFRHESVTAAVCAGQIVGFGFYGYKLALFALMEKLREA</sequence>
<reference key="1">
    <citation type="journal article" date="2003" name="Nature">
        <title>Genome sequence of Bacillus cereus and comparative analysis with Bacillus anthracis.</title>
        <authorList>
            <person name="Ivanova N."/>
            <person name="Sorokin A."/>
            <person name="Anderson I."/>
            <person name="Galleron N."/>
            <person name="Candelon B."/>
            <person name="Kapatral V."/>
            <person name="Bhattacharyya A."/>
            <person name="Reznik G."/>
            <person name="Mikhailova N."/>
            <person name="Lapidus A."/>
            <person name="Chu L."/>
            <person name="Mazur M."/>
            <person name="Goltsman E."/>
            <person name="Larsen N."/>
            <person name="D'Souza M."/>
            <person name="Walunas T."/>
            <person name="Grechkin Y."/>
            <person name="Pusch G."/>
            <person name="Haselkorn R."/>
            <person name="Fonstein M."/>
            <person name="Ehrlich S.D."/>
            <person name="Overbeek R."/>
            <person name="Kyrpides N.C."/>
        </authorList>
    </citation>
    <scope>NUCLEOTIDE SEQUENCE [LARGE SCALE GENOMIC DNA]</scope>
    <source>
        <strain>ATCC 14579 / DSM 31 / CCUG 7414 / JCM 2152 / NBRC 15305 / NCIMB 9373 / NCTC 2599 / NRRL B-3711</strain>
    </source>
</reference>
<evidence type="ECO:0000255" key="1">
    <source>
        <dbReference type="HAMAP-Rule" id="MF_00169"/>
    </source>
</evidence>
<gene>
    <name evidence="1" type="primary">aroQ</name>
    <name type="ordered locus">BC_4199</name>
</gene>
<keyword id="KW-0028">Amino-acid biosynthesis</keyword>
<keyword id="KW-0057">Aromatic amino acid biosynthesis</keyword>
<keyword id="KW-0456">Lyase</keyword>
<keyword id="KW-1185">Reference proteome</keyword>
<dbReference type="EC" id="4.2.1.10" evidence="1"/>
<dbReference type="EMBL" id="AE016877">
    <property type="protein sequence ID" value="AAP11114.1"/>
    <property type="molecule type" value="Genomic_DNA"/>
</dbReference>
<dbReference type="RefSeq" id="NP_833913.1">
    <property type="nucleotide sequence ID" value="NC_004722.1"/>
</dbReference>
<dbReference type="RefSeq" id="WP_000735140.1">
    <property type="nucleotide sequence ID" value="NZ_CP138336.1"/>
</dbReference>
<dbReference type="SMR" id="Q818P8"/>
<dbReference type="STRING" id="226900.BC_4199"/>
<dbReference type="GeneID" id="72450883"/>
<dbReference type="KEGG" id="bce:BC4199"/>
<dbReference type="PATRIC" id="fig|226900.8.peg.4338"/>
<dbReference type="HOGENOM" id="CLU_090968_3_0_9"/>
<dbReference type="OrthoDB" id="9790793at2"/>
<dbReference type="UniPathway" id="UPA00053">
    <property type="reaction ID" value="UER00086"/>
</dbReference>
<dbReference type="Proteomes" id="UP000001417">
    <property type="component" value="Chromosome"/>
</dbReference>
<dbReference type="GO" id="GO:0003855">
    <property type="term" value="F:3-dehydroquinate dehydratase activity"/>
    <property type="evidence" value="ECO:0000318"/>
    <property type="project" value="GO_Central"/>
</dbReference>
<dbReference type="GO" id="GO:0008652">
    <property type="term" value="P:amino acid biosynthetic process"/>
    <property type="evidence" value="ECO:0007669"/>
    <property type="project" value="UniProtKB-KW"/>
</dbReference>
<dbReference type="GO" id="GO:0009073">
    <property type="term" value="P:aromatic amino acid family biosynthetic process"/>
    <property type="evidence" value="ECO:0007669"/>
    <property type="project" value="UniProtKB-KW"/>
</dbReference>
<dbReference type="GO" id="GO:0009423">
    <property type="term" value="P:chorismate biosynthetic process"/>
    <property type="evidence" value="ECO:0007669"/>
    <property type="project" value="UniProtKB-UniRule"/>
</dbReference>
<dbReference type="GO" id="GO:0019631">
    <property type="term" value="P:quinate catabolic process"/>
    <property type="evidence" value="ECO:0000318"/>
    <property type="project" value="GO_Central"/>
</dbReference>
<dbReference type="CDD" id="cd00466">
    <property type="entry name" value="DHQase_II"/>
    <property type="match status" value="1"/>
</dbReference>
<dbReference type="Gene3D" id="3.40.50.9100">
    <property type="entry name" value="Dehydroquinase, class II"/>
    <property type="match status" value="1"/>
</dbReference>
<dbReference type="HAMAP" id="MF_00169">
    <property type="entry name" value="AroQ"/>
    <property type="match status" value="1"/>
</dbReference>
<dbReference type="InterPro" id="IPR001874">
    <property type="entry name" value="DHquinase_II"/>
</dbReference>
<dbReference type="InterPro" id="IPR018509">
    <property type="entry name" value="DHquinase_II_CS"/>
</dbReference>
<dbReference type="InterPro" id="IPR036441">
    <property type="entry name" value="DHquinase_II_sf"/>
</dbReference>
<dbReference type="NCBIfam" id="TIGR01088">
    <property type="entry name" value="aroQ"/>
    <property type="match status" value="1"/>
</dbReference>
<dbReference type="NCBIfam" id="NF003805">
    <property type="entry name" value="PRK05395.1-2"/>
    <property type="match status" value="1"/>
</dbReference>
<dbReference type="NCBIfam" id="NF003806">
    <property type="entry name" value="PRK05395.1-3"/>
    <property type="match status" value="1"/>
</dbReference>
<dbReference type="NCBIfam" id="NF003807">
    <property type="entry name" value="PRK05395.1-4"/>
    <property type="match status" value="1"/>
</dbReference>
<dbReference type="PANTHER" id="PTHR21272">
    <property type="entry name" value="CATABOLIC 3-DEHYDROQUINASE"/>
    <property type="match status" value="1"/>
</dbReference>
<dbReference type="PANTHER" id="PTHR21272:SF3">
    <property type="entry name" value="CATABOLIC 3-DEHYDROQUINASE"/>
    <property type="match status" value="1"/>
</dbReference>
<dbReference type="Pfam" id="PF01220">
    <property type="entry name" value="DHquinase_II"/>
    <property type="match status" value="1"/>
</dbReference>
<dbReference type="PIRSF" id="PIRSF001399">
    <property type="entry name" value="DHquinase_II"/>
    <property type="match status" value="1"/>
</dbReference>
<dbReference type="SUPFAM" id="SSF52304">
    <property type="entry name" value="Type II 3-dehydroquinate dehydratase"/>
    <property type="match status" value="1"/>
</dbReference>
<dbReference type="PROSITE" id="PS01029">
    <property type="entry name" value="DEHYDROQUINASE_II"/>
    <property type="match status" value="1"/>
</dbReference>
<accession>Q818P8</accession>
<proteinExistence type="inferred from homology"/>
<protein>
    <recommendedName>
        <fullName evidence="1">3-dehydroquinate dehydratase</fullName>
        <shortName evidence="1">3-dehydroquinase</shortName>
        <ecNumber evidence="1">4.2.1.10</ecNumber>
    </recommendedName>
    <alternativeName>
        <fullName evidence="1">Type II DHQase</fullName>
    </alternativeName>
</protein>
<feature type="chain" id="PRO_0000159869" description="3-dehydroquinate dehydratase">
    <location>
        <begin position="1"/>
        <end position="146"/>
    </location>
</feature>
<feature type="active site" description="Proton acceptor" evidence="1">
    <location>
        <position position="23"/>
    </location>
</feature>
<feature type="active site" description="Proton donor" evidence="1">
    <location>
        <position position="100"/>
    </location>
</feature>
<feature type="binding site" evidence="1">
    <location>
        <position position="74"/>
    </location>
    <ligand>
        <name>substrate</name>
    </ligand>
</feature>
<feature type="binding site" evidence="1">
    <location>
        <position position="80"/>
    </location>
    <ligand>
        <name>substrate</name>
    </ligand>
</feature>
<feature type="binding site" evidence="1">
    <location>
        <position position="87"/>
    </location>
    <ligand>
        <name>substrate</name>
    </ligand>
</feature>
<feature type="binding site" evidence="1">
    <location>
        <begin position="101"/>
        <end position="102"/>
    </location>
    <ligand>
        <name>substrate</name>
    </ligand>
</feature>
<feature type="binding site" evidence="1">
    <location>
        <position position="111"/>
    </location>
    <ligand>
        <name>substrate</name>
    </ligand>
</feature>
<feature type="site" description="Transition state stabilizer" evidence="1">
    <location>
        <position position="18"/>
    </location>
</feature>